<keyword id="KW-0067">ATP-binding</keyword>
<keyword id="KW-0173">Coenzyme A biosynthesis</keyword>
<keyword id="KW-0963">Cytoplasm</keyword>
<keyword id="KW-0418">Kinase</keyword>
<keyword id="KW-0479">Metal-binding</keyword>
<keyword id="KW-0547">Nucleotide-binding</keyword>
<keyword id="KW-0630">Potassium</keyword>
<keyword id="KW-1185">Reference proteome</keyword>
<keyword id="KW-0808">Transferase</keyword>
<protein>
    <recommendedName>
        <fullName evidence="1">Type III pantothenate kinase</fullName>
        <ecNumber evidence="1">2.7.1.33</ecNumber>
    </recommendedName>
    <alternativeName>
        <fullName evidence="1">PanK-III</fullName>
    </alternativeName>
    <alternativeName>
        <fullName evidence="1">Pantothenic acid kinase</fullName>
    </alternativeName>
</protein>
<evidence type="ECO:0000255" key="1">
    <source>
        <dbReference type="HAMAP-Rule" id="MF_01274"/>
    </source>
</evidence>
<gene>
    <name evidence="1" type="primary">coaX</name>
    <name type="ordered locus">trd_1062</name>
</gene>
<dbReference type="EC" id="2.7.1.33" evidence="1"/>
<dbReference type="EMBL" id="CP001275">
    <property type="protein sequence ID" value="ACM05367.1"/>
    <property type="molecule type" value="Genomic_DNA"/>
</dbReference>
<dbReference type="SMR" id="B9L0J2"/>
<dbReference type="STRING" id="309801.trd_1062"/>
<dbReference type="KEGG" id="tro:trd_1062"/>
<dbReference type="eggNOG" id="COG1521">
    <property type="taxonomic scope" value="Bacteria"/>
</dbReference>
<dbReference type="HOGENOM" id="CLU_066627_1_0_0"/>
<dbReference type="OrthoDB" id="9804707at2"/>
<dbReference type="UniPathway" id="UPA00241">
    <property type="reaction ID" value="UER00352"/>
</dbReference>
<dbReference type="Proteomes" id="UP000000447">
    <property type="component" value="Chromosome"/>
</dbReference>
<dbReference type="GO" id="GO:0005737">
    <property type="term" value="C:cytoplasm"/>
    <property type="evidence" value="ECO:0007669"/>
    <property type="project" value="UniProtKB-SubCell"/>
</dbReference>
<dbReference type="GO" id="GO:0005524">
    <property type="term" value="F:ATP binding"/>
    <property type="evidence" value="ECO:0007669"/>
    <property type="project" value="UniProtKB-UniRule"/>
</dbReference>
<dbReference type="GO" id="GO:0046872">
    <property type="term" value="F:metal ion binding"/>
    <property type="evidence" value="ECO:0007669"/>
    <property type="project" value="UniProtKB-KW"/>
</dbReference>
<dbReference type="GO" id="GO:0004594">
    <property type="term" value="F:pantothenate kinase activity"/>
    <property type="evidence" value="ECO:0007669"/>
    <property type="project" value="UniProtKB-UniRule"/>
</dbReference>
<dbReference type="GO" id="GO:0015937">
    <property type="term" value="P:coenzyme A biosynthetic process"/>
    <property type="evidence" value="ECO:0007669"/>
    <property type="project" value="UniProtKB-UniRule"/>
</dbReference>
<dbReference type="CDD" id="cd24015">
    <property type="entry name" value="ASKHA_NBD_PanK-III"/>
    <property type="match status" value="1"/>
</dbReference>
<dbReference type="Gene3D" id="3.30.420.40">
    <property type="match status" value="2"/>
</dbReference>
<dbReference type="HAMAP" id="MF_01274">
    <property type="entry name" value="Pantothen_kinase_3"/>
    <property type="match status" value="1"/>
</dbReference>
<dbReference type="InterPro" id="IPR043129">
    <property type="entry name" value="ATPase_NBD"/>
</dbReference>
<dbReference type="InterPro" id="IPR004619">
    <property type="entry name" value="Type_III_PanK"/>
</dbReference>
<dbReference type="NCBIfam" id="TIGR00671">
    <property type="entry name" value="baf"/>
    <property type="match status" value="1"/>
</dbReference>
<dbReference type="NCBIfam" id="NF009848">
    <property type="entry name" value="PRK13318.1-6"/>
    <property type="match status" value="1"/>
</dbReference>
<dbReference type="NCBIfam" id="NF009855">
    <property type="entry name" value="PRK13321.1"/>
    <property type="match status" value="1"/>
</dbReference>
<dbReference type="PANTHER" id="PTHR34265">
    <property type="entry name" value="TYPE III PANTOTHENATE KINASE"/>
    <property type="match status" value="1"/>
</dbReference>
<dbReference type="PANTHER" id="PTHR34265:SF1">
    <property type="entry name" value="TYPE III PANTOTHENATE KINASE"/>
    <property type="match status" value="1"/>
</dbReference>
<dbReference type="Pfam" id="PF03309">
    <property type="entry name" value="Pan_kinase"/>
    <property type="match status" value="1"/>
</dbReference>
<dbReference type="SUPFAM" id="SSF53067">
    <property type="entry name" value="Actin-like ATPase domain"/>
    <property type="match status" value="2"/>
</dbReference>
<proteinExistence type="inferred from homology"/>
<comment type="function">
    <text evidence="1">Catalyzes the phosphorylation of pantothenate (Pan), the first step in CoA biosynthesis.</text>
</comment>
<comment type="catalytic activity">
    <reaction evidence="1">
        <text>(R)-pantothenate + ATP = (R)-4'-phosphopantothenate + ADP + H(+)</text>
        <dbReference type="Rhea" id="RHEA:16373"/>
        <dbReference type="ChEBI" id="CHEBI:10986"/>
        <dbReference type="ChEBI" id="CHEBI:15378"/>
        <dbReference type="ChEBI" id="CHEBI:29032"/>
        <dbReference type="ChEBI" id="CHEBI:30616"/>
        <dbReference type="ChEBI" id="CHEBI:456216"/>
        <dbReference type="EC" id="2.7.1.33"/>
    </reaction>
</comment>
<comment type="cofactor">
    <cofactor evidence="1">
        <name>NH4(+)</name>
        <dbReference type="ChEBI" id="CHEBI:28938"/>
    </cofactor>
    <cofactor evidence="1">
        <name>K(+)</name>
        <dbReference type="ChEBI" id="CHEBI:29103"/>
    </cofactor>
    <text evidence="1">A monovalent cation. Ammonium or potassium.</text>
</comment>
<comment type="pathway">
    <text evidence="1">Cofactor biosynthesis; coenzyme A biosynthesis; CoA from (R)-pantothenate: step 1/5.</text>
</comment>
<comment type="subunit">
    <text evidence="1">Homodimer.</text>
</comment>
<comment type="subcellular location">
    <subcellularLocation>
        <location evidence="1">Cytoplasm</location>
    </subcellularLocation>
</comment>
<comment type="similarity">
    <text evidence="1">Belongs to the type III pantothenate kinase family.</text>
</comment>
<sequence length="259" mass="27691">MLMVIDIGNTNVVVGLFAGHELRARWRLATARDRMPDEWWVQLNVLSQSAGFSLGEVVGIAISSVVPSLTATFQELAQRYLLVEPLIVNGAQDYGLPVRVEHPAEVGADRICNAIAAVERYGAPVIVVDFGTGTTFDVIDADGAYIGGAIAPGITIAFEALTQRAARLYTVALQAPPRAIGRNTRESLQSGTVLGYAELVRGLIRRIRSELGHEAPAIATGGLATLIAPLVPEFSAVEADLTLYGLRSAYERMHRSLGA</sequence>
<feature type="chain" id="PRO_1000165207" description="Type III pantothenate kinase">
    <location>
        <begin position="1"/>
        <end position="259"/>
    </location>
</feature>
<feature type="active site" description="Proton acceptor" evidence="1">
    <location>
        <position position="109"/>
    </location>
</feature>
<feature type="binding site" evidence="1">
    <location>
        <begin position="6"/>
        <end position="13"/>
    </location>
    <ligand>
        <name>ATP</name>
        <dbReference type="ChEBI" id="CHEBI:30616"/>
    </ligand>
</feature>
<feature type="binding site" evidence="1">
    <location>
        <begin position="107"/>
        <end position="110"/>
    </location>
    <ligand>
        <name>substrate</name>
    </ligand>
</feature>
<feature type="binding site" evidence="1">
    <location>
        <position position="129"/>
    </location>
    <ligand>
        <name>K(+)</name>
        <dbReference type="ChEBI" id="CHEBI:29103"/>
    </ligand>
</feature>
<feature type="binding site" evidence="1">
    <location>
        <position position="132"/>
    </location>
    <ligand>
        <name>ATP</name>
        <dbReference type="ChEBI" id="CHEBI:30616"/>
    </ligand>
</feature>
<feature type="binding site" evidence="1">
    <location>
        <position position="184"/>
    </location>
    <ligand>
        <name>substrate</name>
    </ligand>
</feature>
<accession>B9L0J2</accession>
<organism>
    <name type="scientific">Thermomicrobium roseum (strain ATCC 27502 / DSM 5159 / P-2)</name>
    <dbReference type="NCBI Taxonomy" id="309801"/>
    <lineage>
        <taxon>Bacteria</taxon>
        <taxon>Pseudomonadati</taxon>
        <taxon>Thermomicrobiota</taxon>
        <taxon>Thermomicrobia</taxon>
        <taxon>Thermomicrobiales</taxon>
        <taxon>Thermomicrobiaceae</taxon>
        <taxon>Thermomicrobium</taxon>
    </lineage>
</organism>
<name>COAX_THERP</name>
<reference key="1">
    <citation type="journal article" date="2009" name="PLoS ONE">
        <title>Complete genome sequence of the aerobic CO-oxidizing thermophile Thermomicrobium roseum.</title>
        <authorList>
            <person name="Wu D."/>
            <person name="Raymond J."/>
            <person name="Wu M."/>
            <person name="Chatterji S."/>
            <person name="Ren Q."/>
            <person name="Graham J.E."/>
            <person name="Bryant D.A."/>
            <person name="Robb F."/>
            <person name="Colman A."/>
            <person name="Tallon L.J."/>
            <person name="Badger J.H."/>
            <person name="Madupu R."/>
            <person name="Ward N.L."/>
            <person name="Eisen J.A."/>
        </authorList>
    </citation>
    <scope>NUCLEOTIDE SEQUENCE [LARGE SCALE GENOMIC DNA]</scope>
    <source>
        <strain>ATCC 27502 / DSM 5159 / P-2</strain>
    </source>
</reference>